<gene>
    <name type="primary">acyP</name>
    <name type="ordered locus">Ava_4481</name>
</gene>
<feature type="chain" id="PRO_0000326649" description="Acylphosphatase">
    <location>
        <begin position="1"/>
        <end position="101"/>
    </location>
</feature>
<feature type="domain" description="Acylphosphatase-like" evidence="1">
    <location>
        <begin position="12"/>
        <end position="98"/>
    </location>
</feature>
<feature type="active site" evidence="1">
    <location>
        <position position="27"/>
    </location>
</feature>
<feature type="active site" evidence="1">
    <location>
        <position position="45"/>
    </location>
</feature>
<sequence>MPNSTPQSQLIRVHVFVTGRVQGVGFRYSTVDTASQLGLTGWVRNLPDGRVEAVFEGARDIVEEMVRWCHAGPPAAVVQDVAVEYEEPEGLRGFEVKRLVN</sequence>
<keyword id="KW-0378">Hydrolase</keyword>
<evidence type="ECO:0000255" key="1">
    <source>
        <dbReference type="PROSITE-ProRule" id="PRU00520"/>
    </source>
</evidence>
<evidence type="ECO:0000305" key="2"/>
<dbReference type="EC" id="3.6.1.7"/>
<dbReference type="EMBL" id="CP000117">
    <property type="protein sequence ID" value="ABA24079.1"/>
    <property type="molecule type" value="Genomic_DNA"/>
</dbReference>
<dbReference type="SMR" id="Q3M4K7"/>
<dbReference type="STRING" id="240292.Ava_4481"/>
<dbReference type="KEGG" id="ava:Ava_4481"/>
<dbReference type="eggNOG" id="COG1254">
    <property type="taxonomic scope" value="Bacteria"/>
</dbReference>
<dbReference type="HOGENOM" id="CLU_141932_3_2_3"/>
<dbReference type="Proteomes" id="UP000002533">
    <property type="component" value="Chromosome"/>
</dbReference>
<dbReference type="GO" id="GO:0003998">
    <property type="term" value="F:acylphosphatase activity"/>
    <property type="evidence" value="ECO:0007669"/>
    <property type="project" value="UniProtKB-EC"/>
</dbReference>
<dbReference type="Gene3D" id="3.30.70.100">
    <property type="match status" value="1"/>
</dbReference>
<dbReference type="InterPro" id="IPR020456">
    <property type="entry name" value="Acylphosphatase"/>
</dbReference>
<dbReference type="InterPro" id="IPR001792">
    <property type="entry name" value="Acylphosphatase-like_dom"/>
</dbReference>
<dbReference type="InterPro" id="IPR036046">
    <property type="entry name" value="Acylphosphatase-like_dom_sf"/>
</dbReference>
<dbReference type="InterPro" id="IPR017968">
    <property type="entry name" value="Acylphosphatase_CS"/>
</dbReference>
<dbReference type="NCBIfam" id="NF011013">
    <property type="entry name" value="PRK14441.1"/>
    <property type="match status" value="1"/>
</dbReference>
<dbReference type="NCBIfam" id="NF011016">
    <property type="entry name" value="PRK14444.1"/>
    <property type="match status" value="1"/>
</dbReference>
<dbReference type="PANTHER" id="PTHR47268">
    <property type="entry name" value="ACYLPHOSPHATASE"/>
    <property type="match status" value="1"/>
</dbReference>
<dbReference type="PANTHER" id="PTHR47268:SF4">
    <property type="entry name" value="ACYLPHOSPHATASE"/>
    <property type="match status" value="1"/>
</dbReference>
<dbReference type="Pfam" id="PF00708">
    <property type="entry name" value="Acylphosphatase"/>
    <property type="match status" value="1"/>
</dbReference>
<dbReference type="PRINTS" id="PR00112">
    <property type="entry name" value="ACYLPHPHTASE"/>
</dbReference>
<dbReference type="SUPFAM" id="SSF54975">
    <property type="entry name" value="Acylphosphatase/BLUF domain-like"/>
    <property type="match status" value="1"/>
</dbReference>
<dbReference type="PROSITE" id="PS00150">
    <property type="entry name" value="ACYLPHOSPHATASE_1"/>
    <property type="match status" value="1"/>
</dbReference>
<dbReference type="PROSITE" id="PS00151">
    <property type="entry name" value="ACYLPHOSPHATASE_2"/>
    <property type="match status" value="1"/>
</dbReference>
<dbReference type="PROSITE" id="PS51160">
    <property type="entry name" value="ACYLPHOSPHATASE_3"/>
    <property type="match status" value="1"/>
</dbReference>
<proteinExistence type="inferred from homology"/>
<comment type="catalytic activity">
    <reaction>
        <text>an acyl phosphate + H2O = a carboxylate + phosphate + H(+)</text>
        <dbReference type="Rhea" id="RHEA:14965"/>
        <dbReference type="ChEBI" id="CHEBI:15377"/>
        <dbReference type="ChEBI" id="CHEBI:15378"/>
        <dbReference type="ChEBI" id="CHEBI:29067"/>
        <dbReference type="ChEBI" id="CHEBI:43474"/>
        <dbReference type="ChEBI" id="CHEBI:59918"/>
        <dbReference type="EC" id="3.6.1.7"/>
    </reaction>
</comment>
<comment type="similarity">
    <text evidence="2">Belongs to the acylphosphatase family.</text>
</comment>
<protein>
    <recommendedName>
        <fullName>Acylphosphatase</fullName>
        <ecNumber>3.6.1.7</ecNumber>
    </recommendedName>
    <alternativeName>
        <fullName>Acylphosphate phosphohydrolase</fullName>
    </alternativeName>
</protein>
<reference key="1">
    <citation type="journal article" date="2014" name="Stand. Genomic Sci.">
        <title>Complete genome sequence of Anabaena variabilis ATCC 29413.</title>
        <authorList>
            <person name="Thiel T."/>
            <person name="Pratte B.S."/>
            <person name="Zhong J."/>
            <person name="Goodwin L."/>
            <person name="Copeland A."/>
            <person name="Lucas S."/>
            <person name="Han C."/>
            <person name="Pitluck S."/>
            <person name="Land M.L."/>
            <person name="Kyrpides N.C."/>
            <person name="Woyke T."/>
        </authorList>
    </citation>
    <scope>NUCLEOTIDE SEQUENCE [LARGE SCALE GENOMIC DNA]</scope>
    <source>
        <strain>ATCC 29413 / PCC 7937</strain>
    </source>
</reference>
<organism>
    <name type="scientific">Trichormus variabilis (strain ATCC 29413 / PCC 7937)</name>
    <name type="common">Anabaena variabilis</name>
    <dbReference type="NCBI Taxonomy" id="240292"/>
    <lineage>
        <taxon>Bacteria</taxon>
        <taxon>Bacillati</taxon>
        <taxon>Cyanobacteriota</taxon>
        <taxon>Cyanophyceae</taxon>
        <taxon>Nostocales</taxon>
        <taxon>Nostocaceae</taxon>
        <taxon>Trichormus</taxon>
    </lineage>
</organism>
<name>ACYP_TRIV2</name>
<accession>Q3M4K7</accession>